<organism>
    <name type="scientific">Actinobacillus succinogenes (strain ATCC 55618 / DSM 22257 / CCUG 43843 / 130Z)</name>
    <dbReference type="NCBI Taxonomy" id="339671"/>
    <lineage>
        <taxon>Bacteria</taxon>
        <taxon>Pseudomonadati</taxon>
        <taxon>Pseudomonadota</taxon>
        <taxon>Gammaproteobacteria</taxon>
        <taxon>Pasteurellales</taxon>
        <taxon>Pasteurellaceae</taxon>
        <taxon>Actinobacillus</taxon>
    </lineage>
</organism>
<sequence>MTHATPQELQAETREIIENLLNDGSDPNALYIIEHHIAHYDFDKLEKIAVDAFKAGYEVSDAEELEDDNGKPLYCFDIVAEVELKAEIIDAQQQQLVPLVAKHGGIYDGWGTYFEDPNADEDEYGEDGEFFDDEFADDDEKR</sequence>
<evidence type="ECO:0000255" key="1">
    <source>
        <dbReference type="HAMAP-Rule" id="MF_01888"/>
    </source>
</evidence>
<evidence type="ECO:0000256" key="2">
    <source>
        <dbReference type="SAM" id="MobiDB-lite"/>
    </source>
</evidence>
<reference key="1">
    <citation type="journal article" date="2010" name="BMC Genomics">
        <title>A genomic perspective on the potential of Actinobacillus succinogenes for industrial succinate production.</title>
        <authorList>
            <person name="McKinlay J.B."/>
            <person name="Laivenieks M."/>
            <person name="Schindler B.D."/>
            <person name="McKinlay A.A."/>
            <person name="Siddaramappa S."/>
            <person name="Challacombe J.F."/>
            <person name="Lowry S.R."/>
            <person name="Clum A."/>
            <person name="Lapidus A.L."/>
            <person name="Burkhart K.B."/>
            <person name="Harkins V."/>
            <person name="Vieille C."/>
        </authorList>
    </citation>
    <scope>NUCLEOTIDE SEQUENCE [LARGE SCALE GENOMIC DNA]</scope>
    <source>
        <strain>ATCC 55618 / DSM 22257 / CCUG 43843 / 130Z</strain>
    </source>
</reference>
<comment type="function">
    <text evidence="1">Globally modulates RNA abundance by binding to RNase E (Rne) and regulating its endonucleolytic activity. Can modulate Rne action in a substrate-dependent manner by altering the composition of the degradosome.</text>
</comment>
<comment type="subunit">
    <text evidence="1">Interacts with the C-terminal region of Rne.</text>
</comment>
<comment type="subcellular location">
    <subcellularLocation>
        <location evidence="1">Cytoplasm</location>
    </subcellularLocation>
</comment>
<comment type="similarity">
    <text evidence="1">Belongs to the RraB family.</text>
</comment>
<gene>
    <name evidence="1" type="primary">rraB</name>
    <name type="ordered locus">Asuc_0244</name>
</gene>
<proteinExistence type="inferred from homology"/>
<keyword id="KW-0963">Cytoplasm</keyword>
<keyword id="KW-1185">Reference proteome</keyword>
<name>RRAB_ACTSZ</name>
<dbReference type="EMBL" id="CP000746">
    <property type="protein sequence ID" value="ABR73623.1"/>
    <property type="molecule type" value="Genomic_DNA"/>
</dbReference>
<dbReference type="RefSeq" id="WP_011978899.1">
    <property type="nucleotide sequence ID" value="NC_009655.1"/>
</dbReference>
<dbReference type="SMR" id="A6VKX6"/>
<dbReference type="STRING" id="339671.Asuc_0244"/>
<dbReference type="KEGG" id="asu:Asuc_0244"/>
<dbReference type="eggNOG" id="COG3076">
    <property type="taxonomic scope" value="Bacteria"/>
</dbReference>
<dbReference type="HOGENOM" id="CLU_128640_0_0_6"/>
<dbReference type="OrthoDB" id="7065464at2"/>
<dbReference type="Proteomes" id="UP000001114">
    <property type="component" value="Chromosome"/>
</dbReference>
<dbReference type="GO" id="GO:0005737">
    <property type="term" value="C:cytoplasm"/>
    <property type="evidence" value="ECO:0007669"/>
    <property type="project" value="UniProtKB-SubCell"/>
</dbReference>
<dbReference type="GO" id="GO:0060698">
    <property type="term" value="F:endoribonuclease inhibitor activity"/>
    <property type="evidence" value="ECO:0007669"/>
    <property type="project" value="UniProtKB-UniRule"/>
</dbReference>
<dbReference type="GO" id="GO:0019899">
    <property type="term" value="F:enzyme binding"/>
    <property type="evidence" value="ECO:0007669"/>
    <property type="project" value="UniProtKB-UniRule"/>
</dbReference>
<dbReference type="Gene3D" id="3.30.70.970">
    <property type="entry name" value="RraB-like"/>
    <property type="match status" value="1"/>
</dbReference>
<dbReference type="HAMAP" id="MF_01888">
    <property type="entry name" value="RraB"/>
    <property type="match status" value="1"/>
</dbReference>
<dbReference type="InterPro" id="IPR016716">
    <property type="entry name" value="RraB"/>
</dbReference>
<dbReference type="InterPro" id="IPR036701">
    <property type="entry name" value="RraB-like_sf"/>
</dbReference>
<dbReference type="InterPro" id="IPR009671">
    <property type="entry name" value="RraB_dom"/>
</dbReference>
<dbReference type="NCBIfam" id="NF008393">
    <property type="entry name" value="PRK11191.1"/>
    <property type="match status" value="1"/>
</dbReference>
<dbReference type="Pfam" id="PF06877">
    <property type="entry name" value="RraB"/>
    <property type="match status" value="1"/>
</dbReference>
<dbReference type="PIRSF" id="PIRSF018193">
    <property type="entry name" value="UCP018193"/>
    <property type="match status" value="1"/>
</dbReference>
<dbReference type="SUPFAM" id="SSF89946">
    <property type="entry name" value="Hypothetical protein VC0424"/>
    <property type="match status" value="1"/>
</dbReference>
<protein>
    <recommendedName>
        <fullName evidence="1">Regulator of ribonuclease activity B</fullName>
    </recommendedName>
</protein>
<accession>A6VKX6</accession>
<feature type="chain" id="PRO_0000404301" description="Regulator of ribonuclease activity B">
    <location>
        <begin position="1"/>
        <end position="142"/>
    </location>
</feature>
<feature type="region of interest" description="Disordered" evidence="2">
    <location>
        <begin position="117"/>
        <end position="142"/>
    </location>
</feature>